<organism>
    <name type="scientific">Haemophilus influenzae (strain ATCC 51907 / DSM 11121 / KW20 / Rd)</name>
    <dbReference type="NCBI Taxonomy" id="71421"/>
    <lineage>
        <taxon>Bacteria</taxon>
        <taxon>Pseudomonadati</taxon>
        <taxon>Pseudomonadota</taxon>
        <taxon>Gammaproteobacteria</taxon>
        <taxon>Pasteurellales</taxon>
        <taxon>Pasteurellaceae</taxon>
        <taxon>Haemophilus</taxon>
    </lineage>
</organism>
<comment type="function">
    <text evidence="1">Catalyzes the reversible oxidation of malate to oxaloacetate.</text>
</comment>
<comment type="catalytic activity">
    <reaction>
        <text>(S)-malate + NAD(+) = oxaloacetate + NADH + H(+)</text>
        <dbReference type="Rhea" id="RHEA:21432"/>
        <dbReference type="ChEBI" id="CHEBI:15378"/>
        <dbReference type="ChEBI" id="CHEBI:15589"/>
        <dbReference type="ChEBI" id="CHEBI:16452"/>
        <dbReference type="ChEBI" id="CHEBI:57540"/>
        <dbReference type="ChEBI" id="CHEBI:57945"/>
        <dbReference type="EC" id="1.1.1.37"/>
    </reaction>
</comment>
<comment type="subunit">
    <text evidence="1">Homodimer.</text>
</comment>
<comment type="similarity">
    <text evidence="2">Belongs to the LDH/MDH superfamily. MDH type 1 family.</text>
</comment>
<protein>
    <recommendedName>
        <fullName>Malate dehydrogenase</fullName>
        <ecNumber>1.1.1.37</ecNumber>
    </recommendedName>
</protein>
<feature type="chain" id="PRO_0000113306" description="Malate dehydrogenase">
    <location>
        <begin position="1"/>
        <end position="311"/>
    </location>
</feature>
<feature type="active site" description="Proton acceptor" evidence="1">
    <location>
        <position position="177"/>
    </location>
</feature>
<feature type="binding site" evidence="1">
    <location>
        <begin position="7"/>
        <end position="13"/>
    </location>
    <ligand>
        <name>NAD(+)</name>
        <dbReference type="ChEBI" id="CHEBI:57540"/>
    </ligand>
</feature>
<feature type="binding site" evidence="1">
    <location>
        <position position="34"/>
    </location>
    <ligand>
        <name>NAD(+)</name>
        <dbReference type="ChEBI" id="CHEBI:57540"/>
    </ligand>
</feature>
<feature type="binding site" evidence="1">
    <location>
        <position position="81"/>
    </location>
    <ligand>
        <name>substrate</name>
    </ligand>
</feature>
<feature type="binding site" evidence="1">
    <location>
        <position position="87"/>
    </location>
    <ligand>
        <name>substrate</name>
    </ligand>
</feature>
<feature type="binding site" evidence="1">
    <location>
        <position position="94"/>
    </location>
    <ligand>
        <name>NAD(+)</name>
        <dbReference type="ChEBI" id="CHEBI:57540"/>
    </ligand>
</feature>
<feature type="binding site" evidence="1">
    <location>
        <begin position="117"/>
        <end position="119"/>
    </location>
    <ligand>
        <name>NAD(+)</name>
        <dbReference type="ChEBI" id="CHEBI:57540"/>
    </ligand>
</feature>
<feature type="binding site" evidence="1">
    <location>
        <position position="119"/>
    </location>
    <ligand>
        <name>substrate</name>
    </ligand>
</feature>
<feature type="binding site" evidence="1">
    <location>
        <position position="153"/>
    </location>
    <ligand>
        <name>substrate</name>
    </ligand>
</feature>
<feature type="binding site" evidence="1">
    <location>
        <position position="227"/>
    </location>
    <ligand>
        <name>NAD(+)</name>
        <dbReference type="ChEBI" id="CHEBI:57540"/>
    </ligand>
</feature>
<feature type="sequence variant" description="In strain: 767 and 794.">
    <original>P</original>
    <variation>L</variation>
    <location>
        <position position="63"/>
    </location>
</feature>
<feature type="sequence variant" description="In strain: 432.">
    <original>T</original>
    <variation>I</variation>
    <location>
        <position position="64"/>
    </location>
</feature>
<feature type="sequence variant" description="In strain: 1124.">
    <original>A</original>
    <variation>T</variation>
    <location>
        <position position="66"/>
    </location>
</feature>
<feature type="sequence variant" description="In strain: 773, 796 and 1231.">
    <original>VT</original>
    <variation>TI</variation>
    <location>
        <begin position="107"/>
        <end position="108"/>
    </location>
</feature>
<feature type="sequence variant" description="In strain: 162, 375, 723, 788, 800, 1008, 1124, 1158, 1180, 1181, 1207, 1233, 1247, a6062, e6158, e6229, e7066, f6237 and 1209.">
    <original>V</original>
    <variation>I</variation>
    <location>
        <position position="107"/>
    </location>
</feature>
<feature type="sequence variant" description="In strain: a7205, BR355 and e6181.">
    <original>V</original>
    <variation>T</variation>
    <location>
        <position position="107"/>
    </location>
</feature>
<feature type="sequence variant" description="In strain: c6132.">
    <original>A</original>
    <variation>V</variation>
    <location>
        <position position="128"/>
    </location>
</feature>
<feature type="sequence variant" description="In strain: a7205.">
    <original>A</original>
    <variation>S</variation>
    <location>
        <position position="135"/>
    </location>
</feature>
<feature type="sequence variant" description="In strain: f6252.">
    <original>G</original>
    <variation>D</variation>
    <location>
        <position position="163"/>
    </location>
</feature>
<feature type="sequence variant" description="In strain: 176, 667, a7205, b7017, c1271, c6134, c7424 and c8032.">
    <original>K</original>
    <variation>E</variation>
    <location>
        <position position="193"/>
    </location>
</feature>
<feature type="strand" evidence="4">
    <location>
        <begin position="2"/>
        <end position="7"/>
    </location>
</feature>
<feature type="helix" evidence="4">
    <location>
        <begin position="11"/>
        <end position="23"/>
    </location>
</feature>
<feature type="strand" evidence="4">
    <location>
        <begin position="29"/>
        <end position="33"/>
    </location>
</feature>
<feature type="helix" evidence="4">
    <location>
        <begin position="39"/>
        <end position="47"/>
    </location>
</feature>
<feature type="strand" evidence="4">
    <location>
        <begin position="54"/>
        <end position="58"/>
    </location>
</feature>
<feature type="helix" evidence="4">
    <location>
        <begin position="64"/>
        <end position="67"/>
    </location>
</feature>
<feature type="strand" evidence="4">
    <location>
        <begin position="71"/>
        <end position="75"/>
    </location>
</feature>
<feature type="helix" evidence="4">
    <location>
        <begin position="87"/>
        <end position="90"/>
    </location>
</feature>
<feature type="helix" evidence="4">
    <location>
        <begin position="91"/>
        <end position="108"/>
    </location>
</feature>
<feature type="strand" evidence="4">
    <location>
        <begin position="112"/>
        <end position="116"/>
    </location>
</feature>
<feature type="strand" evidence="3">
    <location>
        <begin position="118"/>
        <end position="120"/>
    </location>
</feature>
<feature type="helix" evidence="4">
    <location>
        <begin position="121"/>
        <end position="134"/>
    </location>
</feature>
<feature type="helix" evidence="4">
    <location>
        <begin position="140"/>
        <end position="142"/>
    </location>
</feature>
<feature type="strand" evidence="4">
    <location>
        <begin position="143"/>
        <end position="145"/>
    </location>
</feature>
<feature type="helix" evidence="4">
    <location>
        <begin position="148"/>
        <end position="162"/>
    </location>
</feature>
<feature type="turn" evidence="4">
    <location>
        <begin position="166"/>
        <end position="168"/>
    </location>
</feature>
<feature type="strand" evidence="4">
    <location>
        <begin position="173"/>
        <end position="175"/>
    </location>
</feature>
<feature type="helix" evidence="4">
    <location>
        <begin position="179"/>
        <end position="181"/>
    </location>
</feature>
<feature type="strand" evidence="4">
    <location>
        <begin position="182"/>
        <end position="184"/>
    </location>
</feature>
<feature type="helix" evidence="4">
    <location>
        <begin position="186"/>
        <end position="188"/>
    </location>
</feature>
<feature type="turn" evidence="4">
    <location>
        <begin position="196"/>
        <end position="198"/>
    </location>
</feature>
<feature type="helix" evidence="4">
    <location>
        <begin position="199"/>
        <end position="207"/>
    </location>
</feature>
<feature type="helix" evidence="4">
    <location>
        <begin position="209"/>
        <end position="216"/>
    </location>
</feature>
<feature type="turn" evidence="4">
    <location>
        <begin position="217"/>
        <end position="219"/>
    </location>
</feature>
<feature type="helix" evidence="4">
    <location>
        <begin position="225"/>
        <end position="242"/>
    </location>
</feature>
<feature type="strand" evidence="4">
    <location>
        <begin position="247"/>
        <end position="254"/>
    </location>
</feature>
<feature type="strand" evidence="4">
    <location>
        <begin position="261"/>
        <end position="270"/>
    </location>
</feature>
<feature type="strand" evidence="4">
    <location>
        <begin position="273"/>
        <end position="277"/>
    </location>
</feature>
<feature type="helix" evidence="4">
    <location>
        <begin position="285"/>
        <end position="309"/>
    </location>
</feature>
<proteinExistence type="evidence at protein level"/>
<sequence length="311" mass="32543">MKVAVLGAAGGIGQALALLLKLQLPAGTDLSLYDIAPVTPGVAVDVSHIPTAVNVKGFSGEDPTPALEGADVVLISAGVARKPGMDRSDLFNINAGIVRGLIEKVAVTCPKACVGIITNPVNTTVAIAAEVLKKAGVYDKRKLFGVTTLDVLRSETFVAELKGLNVSRTSVPVIGGHSGVTILPLLSQVQYAKWNEDEIEPLTKRIQNAGTEVLNAKAGGGSATLSMAQAAARFARSLVKGLSGETVVECTYVEGDGKYARFFSQPVRLGKEGVEEILPIGPLSNFEQQALENMLPTLRADIELGEKFING</sequence>
<keyword id="KW-0002">3D-structure</keyword>
<keyword id="KW-0520">NAD</keyword>
<keyword id="KW-0560">Oxidoreductase</keyword>
<keyword id="KW-1185">Reference proteome</keyword>
<keyword id="KW-0816">Tricarboxylic acid cycle</keyword>
<evidence type="ECO:0000250" key="1"/>
<evidence type="ECO:0000305" key="2"/>
<evidence type="ECO:0007829" key="3">
    <source>
        <dbReference type="PDB" id="6AOO"/>
    </source>
</evidence>
<evidence type="ECO:0007829" key="4">
    <source>
        <dbReference type="PDB" id="6BAL"/>
    </source>
</evidence>
<accession>P44427</accession>
<accession>Q7WRT7</accession>
<accession>Q83V59</accession>
<accession>Q83V60</accession>
<accession>Q99Q89</accession>
<accession>Q99Q90</accession>
<accession>Q99QA9</accession>
<accession>Q9AMQ2</accession>
<accession>Q9AMQ3</accession>
<accession>Q9AMQ4</accession>
<accession>Q9AMQ5</accession>
<accession>Q9AMQ6</accession>
<gene>
    <name type="primary">mdh</name>
    <name type="ordered locus">HI_1210</name>
</gene>
<dbReference type="EC" id="1.1.1.37"/>
<dbReference type="EMBL" id="L42023">
    <property type="protein sequence ID" value="AAC22864.1"/>
    <property type="molecule type" value="Genomic_DNA"/>
</dbReference>
<dbReference type="EMBL" id="AF322740">
    <property type="protein sequence ID" value="AAK11394.1"/>
    <property type="molecule type" value="Genomic_DNA"/>
</dbReference>
<dbReference type="EMBL" id="AF322741">
    <property type="protein sequence ID" value="AAK11395.1"/>
    <property type="molecule type" value="Genomic_DNA"/>
</dbReference>
<dbReference type="EMBL" id="AF322742">
    <property type="protein sequence ID" value="AAK11396.1"/>
    <property type="molecule type" value="Genomic_DNA"/>
</dbReference>
<dbReference type="EMBL" id="AF322743">
    <property type="protein sequence ID" value="AAK11397.1"/>
    <property type="molecule type" value="Genomic_DNA"/>
</dbReference>
<dbReference type="EMBL" id="AF322744">
    <property type="protein sequence ID" value="AAK11398.1"/>
    <property type="molecule type" value="Genomic_DNA"/>
</dbReference>
<dbReference type="EMBL" id="AF322745">
    <property type="protein sequence ID" value="AAK11399.1"/>
    <property type="molecule type" value="Genomic_DNA"/>
</dbReference>
<dbReference type="EMBL" id="AF322746">
    <property type="protein sequence ID" value="AAK11400.1"/>
    <property type="molecule type" value="Genomic_DNA"/>
</dbReference>
<dbReference type="EMBL" id="AF322747">
    <property type="protein sequence ID" value="AAK11401.1"/>
    <property type="molecule type" value="Genomic_DNA"/>
</dbReference>
<dbReference type="EMBL" id="AF322748">
    <property type="protein sequence ID" value="AAK11402.1"/>
    <property type="molecule type" value="Genomic_DNA"/>
</dbReference>
<dbReference type="EMBL" id="AF322749">
    <property type="protein sequence ID" value="AAK11403.1"/>
    <property type="molecule type" value="Genomic_DNA"/>
</dbReference>
<dbReference type="EMBL" id="AF322750">
    <property type="protein sequence ID" value="AAK11404.1"/>
    <property type="molecule type" value="Genomic_DNA"/>
</dbReference>
<dbReference type="EMBL" id="AF322751">
    <property type="protein sequence ID" value="AAK11405.1"/>
    <property type="molecule type" value="Genomic_DNA"/>
</dbReference>
<dbReference type="EMBL" id="AF322752">
    <property type="protein sequence ID" value="AAK11406.1"/>
    <property type="molecule type" value="Genomic_DNA"/>
</dbReference>
<dbReference type="EMBL" id="AF322753">
    <property type="protein sequence ID" value="AAK11407.1"/>
    <property type="molecule type" value="Genomic_DNA"/>
</dbReference>
<dbReference type="EMBL" id="AF322754">
    <property type="protein sequence ID" value="AAK11408.1"/>
    <property type="molecule type" value="Genomic_DNA"/>
</dbReference>
<dbReference type="EMBL" id="AF322755">
    <property type="protein sequence ID" value="AAK11409.1"/>
    <property type="molecule type" value="Genomic_DNA"/>
</dbReference>
<dbReference type="EMBL" id="AF322756">
    <property type="protein sequence ID" value="AAK11410.1"/>
    <property type="molecule type" value="Genomic_DNA"/>
</dbReference>
<dbReference type="EMBL" id="AF322757">
    <property type="protein sequence ID" value="AAK11411.1"/>
    <property type="molecule type" value="Genomic_DNA"/>
</dbReference>
<dbReference type="EMBL" id="AF322758">
    <property type="protein sequence ID" value="AAK11412.1"/>
    <property type="molecule type" value="Genomic_DNA"/>
</dbReference>
<dbReference type="EMBL" id="AF322759">
    <property type="protein sequence ID" value="AAK11413.1"/>
    <property type="molecule type" value="Genomic_DNA"/>
</dbReference>
<dbReference type="EMBL" id="AF322760">
    <property type="protein sequence ID" value="AAK11414.1"/>
    <property type="molecule type" value="Genomic_DNA"/>
</dbReference>
<dbReference type="EMBL" id="AF322761">
    <property type="protein sequence ID" value="AAK11415.1"/>
    <property type="molecule type" value="Genomic_DNA"/>
</dbReference>
<dbReference type="EMBL" id="AF322762">
    <property type="protein sequence ID" value="AAK11416.1"/>
    <property type="molecule type" value="Genomic_DNA"/>
</dbReference>
<dbReference type="EMBL" id="AF322763">
    <property type="protein sequence ID" value="AAK11417.1"/>
    <property type="molecule type" value="Genomic_DNA"/>
</dbReference>
<dbReference type="EMBL" id="AF322764">
    <property type="protein sequence ID" value="AAK11418.1"/>
    <property type="molecule type" value="Genomic_DNA"/>
</dbReference>
<dbReference type="EMBL" id="AF322765">
    <property type="protein sequence ID" value="AAK11419.1"/>
    <property type="molecule type" value="Genomic_DNA"/>
</dbReference>
<dbReference type="EMBL" id="AF322766">
    <property type="protein sequence ID" value="AAK11420.1"/>
    <property type="molecule type" value="Genomic_DNA"/>
</dbReference>
<dbReference type="EMBL" id="AF322767">
    <property type="protein sequence ID" value="AAK11421.1"/>
    <property type="molecule type" value="Genomic_DNA"/>
</dbReference>
<dbReference type="EMBL" id="AF322768">
    <property type="protein sequence ID" value="AAK11422.1"/>
    <property type="molecule type" value="Genomic_DNA"/>
</dbReference>
<dbReference type="EMBL" id="AF322769">
    <property type="protein sequence ID" value="AAK11423.1"/>
    <property type="molecule type" value="Genomic_DNA"/>
</dbReference>
<dbReference type="EMBL" id="AF322770">
    <property type="protein sequence ID" value="AAK11424.1"/>
    <property type="molecule type" value="Genomic_DNA"/>
</dbReference>
<dbReference type="EMBL" id="AF322771">
    <property type="protein sequence ID" value="AAK11425.1"/>
    <property type="molecule type" value="Genomic_DNA"/>
</dbReference>
<dbReference type="EMBL" id="AF322772">
    <property type="protein sequence ID" value="AAK11426.1"/>
    <property type="molecule type" value="Genomic_DNA"/>
</dbReference>
<dbReference type="EMBL" id="AF322773">
    <property type="protein sequence ID" value="AAK11427.1"/>
    <property type="molecule type" value="Genomic_DNA"/>
</dbReference>
<dbReference type="EMBL" id="AF322774">
    <property type="protein sequence ID" value="AAK11428.1"/>
    <property type="molecule type" value="Genomic_DNA"/>
</dbReference>
<dbReference type="EMBL" id="AF322775">
    <property type="protein sequence ID" value="AAK11429.1"/>
    <property type="molecule type" value="Genomic_DNA"/>
</dbReference>
<dbReference type="EMBL" id="AF322776">
    <property type="protein sequence ID" value="AAK11430.1"/>
    <property type="molecule type" value="Genomic_DNA"/>
</dbReference>
<dbReference type="EMBL" id="AF536037">
    <property type="protein sequence ID" value="AAP19893.1"/>
    <property type="molecule type" value="Genomic_DNA"/>
</dbReference>
<dbReference type="EMBL" id="AF536038">
    <property type="protein sequence ID" value="AAP19894.1"/>
    <property type="molecule type" value="Genomic_DNA"/>
</dbReference>
<dbReference type="EMBL" id="AF536039">
    <property type="protein sequence ID" value="AAP19895.1"/>
    <property type="molecule type" value="Genomic_DNA"/>
</dbReference>
<dbReference type="EMBL" id="AF536040">
    <property type="protein sequence ID" value="AAP19896.1"/>
    <property type="molecule type" value="Genomic_DNA"/>
</dbReference>
<dbReference type="EMBL" id="AF536041">
    <property type="protein sequence ID" value="AAP19897.1"/>
    <property type="molecule type" value="Genomic_DNA"/>
</dbReference>
<dbReference type="EMBL" id="AF536042">
    <property type="protein sequence ID" value="AAP19898.1"/>
    <property type="molecule type" value="Genomic_DNA"/>
</dbReference>
<dbReference type="EMBL" id="AF536043">
    <property type="protein sequence ID" value="AAP19899.1"/>
    <property type="molecule type" value="Genomic_DNA"/>
</dbReference>
<dbReference type="EMBL" id="AF536044">
    <property type="protein sequence ID" value="AAP19900.1"/>
    <property type="molecule type" value="Genomic_DNA"/>
</dbReference>
<dbReference type="EMBL" id="AF536045">
    <property type="protein sequence ID" value="AAP19901.1"/>
    <property type="molecule type" value="Genomic_DNA"/>
</dbReference>
<dbReference type="EMBL" id="AF536046">
    <property type="protein sequence ID" value="AAP19902.1"/>
    <property type="molecule type" value="Genomic_DNA"/>
</dbReference>
<dbReference type="EMBL" id="AF536047">
    <property type="protein sequence ID" value="AAP19903.1"/>
    <property type="molecule type" value="Genomic_DNA"/>
</dbReference>
<dbReference type="EMBL" id="AF536048">
    <property type="protein sequence ID" value="AAP19904.1"/>
    <property type="molecule type" value="Genomic_DNA"/>
</dbReference>
<dbReference type="EMBL" id="AF536049">
    <property type="protein sequence ID" value="AAP19905.1"/>
    <property type="molecule type" value="Genomic_DNA"/>
</dbReference>
<dbReference type="EMBL" id="AF536050">
    <property type="protein sequence ID" value="AAP19906.1"/>
    <property type="molecule type" value="Genomic_DNA"/>
</dbReference>
<dbReference type="EMBL" id="AY245392">
    <property type="protein sequence ID" value="AAP74406.1"/>
    <property type="molecule type" value="Genomic_DNA"/>
</dbReference>
<dbReference type="EMBL" id="AY245393">
    <property type="protein sequence ID" value="AAP74407.1"/>
    <property type="molecule type" value="Genomic_DNA"/>
</dbReference>
<dbReference type="EMBL" id="AY245394">
    <property type="protein sequence ID" value="AAP74408.1"/>
    <property type="molecule type" value="Genomic_DNA"/>
</dbReference>
<dbReference type="EMBL" id="AY245395">
    <property type="protein sequence ID" value="AAP74409.1"/>
    <property type="molecule type" value="Genomic_DNA"/>
</dbReference>
<dbReference type="EMBL" id="AY245396">
    <property type="protein sequence ID" value="AAP74410.1"/>
    <property type="molecule type" value="Genomic_DNA"/>
</dbReference>
<dbReference type="EMBL" id="AY245397">
    <property type="protein sequence ID" value="AAP74411.1"/>
    <property type="molecule type" value="Genomic_DNA"/>
</dbReference>
<dbReference type="EMBL" id="AY245398">
    <property type="protein sequence ID" value="AAP74412.1"/>
    <property type="molecule type" value="Genomic_DNA"/>
</dbReference>
<dbReference type="EMBL" id="AY245399">
    <property type="protein sequence ID" value="AAP74413.1"/>
    <property type="molecule type" value="Genomic_DNA"/>
</dbReference>
<dbReference type="EMBL" id="AF525726">
    <property type="protein sequence ID" value="AAM91960.1"/>
    <property type="molecule type" value="Genomic_DNA"/>
</dbReference>
<dbReference type="EMBL" id="AF525727">
    <property type="protein sequence ID" value="AAM91961.1"/>
    <property type="molecule type" value="Genomic_DNA"/>
</dbReference>
<dbReference type="EMBL" id="AF525728">
    <property type="protein sequence ID" value="AAM91962.1"/>
    <property type="molecule type" value="Genomic_DNA"/>
</dbReference>
<dbReference type="EMBL" id="AF525729">
    <property type="protein sequence ID" value="AAM91963.1"/>
    <property type="molecule type" value="Genomic_DNA"/>
</dbReference>
<dbReference type="EMBL" id="AF525730">
    <property type="protein sequence ID" value="AAM91964.1"/>
    <property type="molecule type" value="Genomic_DNA"/>
</dbReference>
<dbReference type="PIR" id="C64110">
    <property type="entry name" value="C64110"/>
</dbReference>
<dbReference type="RefSeq" id="NP_439366.1">
    <property type="nucleotide sequence ID" value="NC_000907.1"/>
</dbReference>
<dbReference type="PDB" id="6AOO">
    <property type="method" value="X-ray"/>
    <property type="resolution" value="2.15 A"/>
    <property type="chains" value="A/B=1-311"/>
</dbReference>
<dbReference type="PDB" id="6BAL">
    <property type="method" value="X-ray"/>
    <property type="resolution" value="2.10 A"/>
    <property type="chains" value="A/B/C/D/E/F/G/H=1-311"/>
</dbReference>
<dbReference type="PDBsum" id="6AOO"/>
<dbReference type="PDBsum" id="6BAL"/>
<dbReference type="SMR" id="P44427"/>
<dbReference type="STRING" id="71421.HI_1210"/>
<dbReference type="EnsemblBacteria" id="AAC22864">
    <property type="protein sequence ID" value="AAC22864"/>
    <property type="gene ID" value="HI_1210"/>
</dbReference>
<dbReference type="KEGG" id="hin:HI_1210"/>
<dbReference type="PATRIC" id="fig|71421.8.peg.1262"/>
<dbReference type="eggNOG" id="COG0039">
    <property type="taxonomic scope" value="Bacteria"/>
</dbReference>
<dbReference type="HOGENOM" id="CLU_047181_0_1_6"/>
<dbReference type="OrthoDB" id="9802969at2"/>
<dbReference type="PhylomeDB" id="P44427"/>
<dbReference type="BioCyc" id="HINF71421:G1GJ1-1241-MONOMER"/>
<dbReference type="Proteomes" id="UP000000579">
    <property type="component" value="Chromosome"/>
</dbReference>
<dbReference type="GO" id="GO:0005737">
    <property type="term" value="C:cytoplasm"/>
    <property type="evidence" value="ECO:0000318"/>
    <property type="project" value="GO_Central"/>
</dbReference>
<dbReference type="GO" id="GO:0030060">
    <property type="term" value="F:L-malate dehydrogenase (NAD+) activity"/>
    <property type="evidence" value="ECO:0000318"/>
    <property type="project" value="GO_Central"/>
</dbReference>
<dbReference type="GO" id="GO:0006108">
    <property type="term" value="P:malate metabolic process"/>
    <property type="evidence" value="ECO:0007669"/>
    <property type="project" value="InterPro"/>
</dbReference>
<dbReference type="GO" id="GO:0006099">
    <property type="term" value="P:tricarboxylic acid cycle"/>
    <property type="evidence" value="ECO:0007669"/>
    <property type="project" value="UniProtKB-UniRule"/>
</dbReference>
<dbReference type="CDD" id="cd01337">
    <property type="entry name" value="MDH_glyoxysomal_mitochondrial"/>
    <property type="match status" value="1"/>
</dbReference>
<dbReference type="FunFam" id="3.40.50.720:FF:000017">
    <property type="entry name" value="Malate dehydrogenase"/>
    <property type="match status" value="1"/>
</dbReference>
<dbReference type="FunFam" id="3.90.110.10:FF:000001">
    <property type="entry name" value="Malate dehydrogenase"/>
    <property type="match status" value="1"/>
</dbReference>
<dbReference type="Gene3D" id="3.90.110.10">
    <property type="entry name" value="Lactate dehydrogenase/glycoside hydrolase, family 4, C-terminal"/>
    <property type="match status" value="1"/>
</dbReference>
<dbReference type="Gene3D" id="3.40.50.720">
    <property type="entry name" value="NAD(P)-binding Rossmann-like Domain"/>
    <property type="match status" value="1"/>
</dbReference>
<dbReference type="HAMAP" id="MF_01516">
    <property type="entry name" value="Malate_dehydrog_1"/>
    <property type="match status" value="1"/>
</dbReference>
<dbReference type="InterPro" id="IPR001557">
    <property type="entry name" value="L-lactate/malate_DH"/>
</dbReference>
<dbReference type="InterPro" id="IPR022383">
    <property type="entry name" value="Lactate/malate_DH_C"/>
</dbReference>
<dbReference type="InterPro" id="IPR001236">
    <property type="entry name" value="Lactate/malate_DH_N"/>
</dbReference>
<dbReference type="InterPro" id="IPR015955">
    <property type="entry name" value="Lactate_DH/Glyco_Ohase_4_C"/>
</dbReference>
<dbReference type="InterPro" id="IPR001252">
    <property type="entry name" value="Malate_DH_AS"/>
</dbReference>
<dbReference type="InterPro" id="IPR010097">
    <property type="entry name" value="Malate_DH_type1"/>
</dbReference>
<dbReference type="InterPro" id="IPR023958">
    <property type="entry name" value="Malate_DH_type1_bac"/>
</dbReference>
<dbReference type="InterPro" id="IPR036291">
    <property type="entry name" value="NAD(P)-bd_dom_sf"/>
</dbReference>
<dbReference type="NCBIfam" id="TIGR01772">
    <property type="entry name" value="MDH_euk_gproteo"/>
    <property type="match status" value="1"/>
</dbReference>
<dbReference type="PANTHER" id="PTHR11540">
    <property type="entry name" value="MALATE AND LACTATE DEHYDROGENASE"/>
    <property type="match status" value="1"/>
</dbReference>
<dbReference type="PANTHER" id="PTHR11540:SF16">
    <property type="entry name" value="MALATE DEHYDROGENASE, MITOCHONDRIAL"/>
    <property type="match status" value="1"/>
</dbReference>
<dbReference type="Pfam" id="PF02866">
    <property type="entry name" value="Ldh_1_C"/>
    <property type="match status" value="1"/>
</dbReference>
<dbReference type="Pfam" id="PF00056">
    <property type="entry name" value="Ldh_1_N"/>
    <property type="match status" value="1"/>
</dbReference>
<dbReference type="PIRSF" id="PIRSF000102">
    <property type="entry name" value="Lac_mal_DH"/>
    <property type="match status" value="1"/>
</dbReference>
<dbReference type="SUPFAM" id="SSF56327">
    <property type="entry name" value="LDH C-terminal domain-like"/>
    <property type="match status" value="1"/>
</dbReference>
<dbReference type="SUPFAM" id="SSF51735">
    <property type="entry name" value="NAD(P)-binding Rossmann-fold domains"/>
    <property type="match status" value="1"/>
</dbReference>
<dbReference type="PROSITE" id="PS00068">
    <property type="entry name" value="MDH"/>
    <property type="match status" value="1"/>
</dbReference>
<reference key="1">
    <citation type="journal article" date="1995" name="Science">
        <title>Whole-genome random sequencing and assembly of Haemophilus influenzae Rd.</title>
        <authorList>
            <person name="Fleischmann R.D."/>
            <person name="Adams M.D."/>
            <person name="White O."/>
            <person name="Clayton R.A."/>
            <person name="Kirkness E.F."/>
            <person name="Kerlavage A.R."/>
            <person name="Bult C.J."/>
            <person name="Tomb J.-F."/>
            <person name="Dougherty B.A."/>
            <person name="Merrick J.M."/>
            <person name="McKenney K."/>
            <person name="Sutton G.G."/>
            <person name="FitzHugh W."/>
            <person name="Fields C.A."/>
            <person name="Gocayne J.D."/>
            <person name="Scott J.D."/>
            <person name="Shirley R."/>
            <person name="Liu L.-I."/>
            <person name="Glodek A."/>
            <person name="Kelley J.M."/>
            <person name="Weidman J.F."/>
            <person name="Phillips C.A."/>
            <person name="Spriggs T."/>
            <person name="Hedblom E."/>
            <person name="Cotton M.D."/>
            <person name="Utterback T.R."/>
            <person name="Hanna M.C."/>
            <person name="Nguyen D.T."/>
            <person name="Saudek D.M."/>
            <person name="Brandon R.C."/>
            <person name="Fine L.D."/>
            <person name="Fritchman J.L."/>
            <person name="Fuhrmann J.L."/>
            <person name="Geoghagen N.S.M."/>
            <person name="Gnehm C.L."/>
            <person name="McDonald L.A."/>
            <person name="Small K.V."/>
            <person name="Fraser C.M."/>
            <person name="Smith H.O."/>
            <person name="Venter J.C."/>
        </authorList>
    </citation>
    <scope>NUCLEOTIDE SEQUENCE [LARGE SCALE GENOMIC DNA]</scope>
    <source>
        <strain>ATCC 51907 / DSM 11121 / KW20 / Rd</strain>
    </source>
</reference>
<reference key="2">
    <citation type="journal article" date="2001" name="Proc. Natl. Acad. Sci. U.S.A.">
        <title>Recombination within natural populations of pathogenic bacteria: Short-term empirical estimates and long-term phylogenetic consequences.</title>
        <authorList>
            <person name="Feil E.J."/>
            <person name="Holmes E.C."/>
            <person name="Bessen D.E."/>
            <person name="Chan M.-S."/>
            <person name="Day N.P.J."/>
            <person name="Enright M.C."/>
            <person name="Goldstein R."/>
            <person name="Hood D.W."/>
            <person name="Kalia A."/>
            <person name="Moore C.E."/>
            <person name="Zhou J."/>
            <person name="Spratt B.G."/>
        </authorList>
    </citation>
    <scope>NUCLEOTIDE SEQUENCE [GENOMIC DNA] OF 61-195</scope>
    <source>
        <strain>1124</strain>
        <strain>1158</strain>
        <strain>1181</strain>
        <strain>1209</strain>
        <strain>375</strain>
        <strain>477</strain>
        <strain>667</strain>
        <strain>723</strain>
        <strain>a1042</strain>
        <strain>a6062</strain>
        <strain>a6064</strain>
        <strain>a6073</strain>
        <strain>a7190</strain>
        <strain>a7205</strain>
        <strain>b1324</strain>
        <strain>b6107</strain>
        <strain>b7017</strain>
        <strain>b7109</strain>
        <strain>b7651</strain>
        <strain>b7717</strain>
        <strain>Beagan</strain>
        <strain>c1271</strain>
        <strain>c6132</strain>
        <strain>c6134</strain>
        <strain>c7424</strain>
        <strain>c8032</strain>
        <strain>d6137</strain>
        <strain>Drm118</strain>
        <strain>e6158</strain>
        <strain>e6181</strain>
        <strain>e6229</strain>
        <strain>e7066</strain>
        <strain>f6237</strain>
        <strain>f6252</strain>
        <strain>f7283</strain>
        <strain>f7290</strain>
    </source>
</reference>
<reference key="3">
    <citation type="journal article" date="2003" name="Infect. Genet. Evol.">
        <title>High rates of recombination in otitis media isolates of non-typeable Haemophilus influenzae.</title>
        <authorList>
            <person name="Cody A.J."/>
            <person name="Field D."/>
            <person name="Feil E.J."/>
            <person name="Stringer S."/>
            <person name="Deadman M.E."/>
            <person name="Tsolaki A.G."/>
            <person name="Gratz B."/>
            <person name="Bouchet V."/>
            <person name="Goldstein R."/>
            <person name="Hood D.W."/>
            <person name="Moxon E.R."/>
        </authorList>
    </citation>
    <scope>NUCLEOTIDE SEQUENCE [GENOMIC DNA] OF 61-195</scope>
    <source>
        <strain>1008</strain>
        <strain>1180</strain>
        <strain>1200</strain>
        <strain>1207</strain>
        <strain>1231</strain>
        <strain>1233</strain>
        <strain>1247</strain>
        <strain>1268</strain>
        <strain>162</strain>
        <strain>176</strain>
        <strain>285</strain>
        <strain>432</strain>
        <strain>486</strain>
        <strain>981</strain>
    </source>
</reference>
<reference key="4">
    <citation type="journal article" date="2003" name="J. Clin. Microbiol.">
        <title>Invasive disease due to nontypeable Haemophilus influenzae among children in Arkansas.</title>
        <authorList>
            <person name="O'Neill J.M."/>
            <person name="St Geme J.W. III"/>
            <person name="Cutter D."/>
            <person name="Adderson E.E."/>
            <person name="Anyanwu J."/>
            <person name="Jacobs R.F."/>
            <person name="Schutze G.E."/>
        </authorList>
    </citation>
    <scope>NUCLEOTIDE SEQUENCE [GENOMIC DNA] OF 61-195</scope>
    <source>
        <strain>767</strain>
        <strain>769</strain>
        <strain>773</strain>
        <strain>788</strain>
        <strain>794</strain>
        <strain>795</strain>
        <strain>796</strain>
        <strain>800</strain>
    </source>
</reference>
<reference key="5">
    <citation type="journal article" date="2003" name="Mol. Genet. Mikrobiol. Virusol.">
        <title>Multilocus sequence-typing for characterization of Moscow strains of Haemophilus influenzae type b.</title>
        <authorList>
            <person name="Platonov A.E."/>
            <person name="Mironov K.O."/>
            <person name="Iatsyshina S.B."/>
            <person name="Koroleva I.S."/>
            <person name="Platonova O.V."/>
            <person name="Gushchin A.E."/>
            <person name="Shipulin G.A."/>
        </authorList>
    </citation>
    <scope>NUCLEOTIDE SEQUENCE [GENOMIC DNA] OF 61-195</scope>
    <source>
        <strain>BR134</strain>
        <strain>BR229</strain>
        <strain>BR355</strain>
        <strain>BR48</strain>
        <strain>BRC1-13</strain>
    </source>
</reference>
<name>MDH_HAEIN</name>